<evidence type="ECO:0000255" key="1">
    <source>
        <dbReference type="PROSITE-ProRule" id="PRU00094"/>
    </source>
</evidence>
<evidence type="ECO:0000269" key="2">
    <source>
    </source>
</evidence>
<evidence type="ECO:0000269" key="3">
    <source>
    </source>
</evidence>
<evidence type="ECO:0000269" key="4">
    <source>
    </source>
</evidence>
<evidence type="ECO:0000305" key="5"/>
<evidence type="ECO:0000305" key="6">
    <source>
    </source>
</evidence>
<evidence type="ECO:0000305" key="7">
    <source>
    </source>
</evidence>
<evidence type="ECO:0000312" key="8">
    <source>
        <dbReference type="Proteomes" id="UP000001940"/>
    </source>
</evidence>
<evidence type="ECO:0000312" key="9">
    <source>
        <dbReference type="WormBase" id="C39B10.6a"/>
    </source>
</evidence>
<evidence type="ECO:0000312" key="10">
    <source>
        <dbReference type="WormBase" id="C39B10.6b"/>
    </source>
</evidence>
<protein>
    <recommendedName>
        <fullName evidence="5">Probable transcription factor elt-4</fullName>
    </recommendedName>
    <alternativeName>
        <fullName evidence="5">GATA-type domain-containing protein elt-4</fullName>
    </alternativeName>
</protein>
<feature type="chain" id="PRO_0000454564" description="Probable transcription factor elt-4">
    <location>
        <begin position="1"/>
        <end position="72"/>
    </location>
</feature>
<feature type="zinc finger region" description="GATA-type" evidence="1">
    <location>
        <begin position="16"/>
        <end position="40"/>
    </location>
</feature>
<feature type="splice variant" id="VSP_061352" description="In isoform b." evidence="5">
    <original>MDNNYLDASHRKRLVCSNCNGTNTTLWRRKAEGDPVCNACGLYFKLHH</original>
    <variation>MLLIGNGLYAPIAMVRTQLSGEEKLKEIQSAMLVDYISSFITLPAPSQ</variation>
    <location>
        <begin position="1"/>
        <end position="48"/>
    </location>
</feature>
<feature type="splice variant" id="VSP_061353" description="In isoform b." evidence="5">
    <location>
        <begin position="49"/>
        <end position="72"/>
    </location>
</feature>
<name>ELT4_CAEEL</name>
<accession>Q8MQA7</accession>
<accession>D0VWN0</accession>
<comment type="function">
    <text evidence="3 4">Probable transcription factor (PubMed:20938051, PubMed:24834345). Plays a role in regulating heme-dependent expression of heme transporter hrg-1 (PubMed:20938051). Modulates lifespan in a daf-16-dependent manner (PubMed:24834345).</text>
</comment>
<comment type="subcellular location">
    <subcellularLocation>
        <location evidence="6 7">Nucleus</location>
    </subcellularLocation>
</comment>
<comment type="alternative products">
    <event type="alternative initiation"/>
    <isoform>
        <id>Q8MQA7-1</id>
        <name evidence="9">a</name>
        <sequence type="displayed"/>
    </isoform>
    <isoform>
        <id>Q8MQA7-2</id>
        <name evidence="10">b</name>
        <sequence type="described" ref="VSP_061352 VSP_061353"/>
    </isoform>
</comment>
<comment type="developmental stage">
    <text evidence="2">Expressed at the 1.5-fold stage of embryogenesis and by the 3-fold stage, in all cells of the gut (PubMed:14573471). Expressed in nine cells in the posterior bulb of the pharynx from the 3-fold stage (PubMed:14573471). Expressed in the intestine at all stages of development (PubMed:14573471).</text>
</comment>
<comment type="disruption phenotype">
    <text evidence="2 3 4">No phenotype detected and so may be dispensable (PubMed:14573471). RNAi-mediated knockdown causes intestinal expression of heme transporter hrg-1 induced by heme to be reduced drastically in L3 stage larvae (PubMed:20938051). Reduces expression of the daf-16 isoforms d and f (PubMed:24834345).</text>
</comment>
<dbReference type="EMBL" id="BX284606">
    <property type="protein sequence ID" value="CBH29655.2"/>
    <property type="molecule type" value="Genomic_DNA"/>
</dbReference>
<dbReference type="EMBL" id="BX284606">
    <property type="protein sequence ID" value="CAD44111.1"/>
    <property type="molecule type" value="Genomic_DNA"/>
</dbReference>
<dbReference type="RefSeq" id="NP_001257105.1">
    <molecule id="Q8MQA7-1"/>
    <property type="nucleotide sequence ID" value="NM_001270176.2"/>
</dbReference>
<dbReference type="RefSeq" id="NP_001367223.1">
    <molecule id="Q8MQA7-2"/>
    <property type="nucleotide sequence ID" value="NM_001381084.1"/>
</dbReference>
<dbReference type="SMR" id="Q8MQA7"/>
<dbReference type="FunCoup" id="Q8MQA7">
    <property type="interactions" value="80"/>
</dbReference>
<dbReference type="IntAct" id="Q8MQA7">
    <property type="interactions" value="2"/>
</dbReference>
<dbReference type="STRING" id="6239.C39B10.6a.1"/>
<dbReference type="PaxDb" id="6239-C39B10.6a"/>
<dbReference type="EnsemblMetazoa" id="C39B10.6a.1">
    <molecule id="Q8MQA7-1"/>
    <property type="protein sequence ID" value="C39B10.6a.1"/>
    <property type="gene ID" value="WBGene00001252"/>
</dbReference>
<dbReference type="EnsemblMetazoa" id="C39B10.6b.1">
    <molecule id="Q8MQA7-2"/>
    <property type="protein sequence ID" value="C39B10.6b.1"/>
    <property type="gene ID" value="WBGene00001252"/>
</dbReference>
<dbReference type="GeneID" id="181249"/>
<dbReference type="KEGG" id="cel:CELE_C39B10.6"/>
<dbReference type="UCSC" id="C39B10.6">
    <molecule id="Q8MQA7-1"/>
    <property type="organism name" value="c. elegans"/>
</dbReference>
<dbReference type="AGR" id="WB:WBGene00001252"/>
<dbReference type="CTD" id="181249"/>
<dbReference type="WormBase" id="C39B10.6a">
    <molecule id="Q8MQA7-1"/>
    <property type="protein sequence ID" value="CE31441"/>
    <property type="gene ID" value="WBGene00001252"/>
    <property type="gene designation" value="elt-4"/>
</dbReference>
<dbReference type="WormBase" id="C39B10.6b">
    <molecule id="Q8MQA7-2"/>
    <property type="protein sequence ID" value="CE51998"/>
    <property type="gene ID" value="WBGene00001252"/>
    <property type="gene designation" value="elt-4"/>
</dbReference>
<dbReference type="eggNOG" id="KOG1601">
    <property type="taxonomic scope" value="Eukaryota"/>
</dbReference>
<dbReference type="GeneTree" id="ENSGT00970000196325"/>
<dbReference type="HOGENOM" id="CLU_2724521_0_0_1"/>
<dbReference type="InParanoid" id="Q8MQA7"/>
<dbReference type="OMA" id="NYLDASH"/>
<dbReference type="OrthoDB" id="515401at2759"/>
<dbReference type="PhylomeDB" id="Q8MQA7"/>
<dbReference type="PRO" id="PR:Q8MQA7"/>
<dbReference type="Proteomes" id="UP000001940">
    <property type="component" value="Chromosome X"/>
</dbReference>
<dbReference type="Bgee" id="WBGene00001252">
    <property type="expression patterns" value="Expressed in larva and 2 other cell types or tissues"/>
</dbReference>
<dbReference type="ExpressionAtlas" id="Q8MQA7">
    <property type="expression patterns" value="baseline and differential"/>
</dbReference>
<dbReference type="GO" id="GO:0005634">
    <property type="term" value="C:nucleus"/>
    <property type="evidence" value="ECO:0000314"/>
    <property type="project" value="UniProtKB"/>
</dbReference>
<dbReference type="GO" id="GO:0003700">
    <property type="term" value="F:DNA-binding transcription factor activity"/>
    <property type="evidence" value="ECO:0007669"/>
    <property type="project" value="InterPro"/>
</dbReference>
<dbReference type="GO" id="GO:0003690">
    <property type="term" value="F:double-stranded DNA binding"/>
    <property type="evidence" value="ECO:0000314"/>
    <property type="project" value="WormBase"/>
</dbReference>
<dbReference type="GO" id="GO:0043565">
    <property type="term" value="F:sequence-specific DNA binding"/>
    <property type="evidence" value="ECO:0007669"/>
    <property type="project" value="InterPro"/>
</dbReference>
<dbReference type="GO" id="GO:0008270">
    <property type="term" value="F:zinc ion binding"/>
    <property type="evidence" value="ECO:0007669"/>
    <property type="project" value="UniProtKB-KW"/>
</dbReference>
<dbReference type="GO" id="GO:0008340">
    <property type="term" value="P:determination of adult lifespan"/>
    <property type="evidence" value="ECO:0000315"/>
    <property type="project" value="UniProtKB"/>
</dbReference>
<dbReference type="GO" id="GO:0045944">
    <property type="term" value="P:positive regulation of transcription by RNA polymerase II"/>
    <property type="evidence" value="ECO:0000315"/>
    <property type="project" value="UniProtKB"/>
</dbReference>
<dbReference type="CDD" id="cd00202">
    <property type="entry name" value="ZnF_GATA"/>
    <property type="match status" value="1"/>
</dbReference>
<dbReference type="Gene3D" id="3.30.50.10">
    <property type="entry name" value="Erythroid Transcription Factor GATA-1, subunit A"/>
    <property type="match status" value="1"/>
</dbReference>
<dbReference type="InterPro" id="IPR039355">
    <property type="entry name" value="Transcription_factor_GATA"/>
</dbReference>
<dbReference type="InterPro" id="IPR000679">
    <property type="entry name" value="Znf_GATA"/>
</dbReference>
<dbReference type="InterPro" id="IPR013088">
    <property type="entry name" value="Znf_NHR/GATA"/>
</dbReference>
<dbReference type="PANTHER" id="PTHR10071:SF281">
    <property type="entry name" value="BOX A-BINDING FACTOR-RELATED"/>
    <property type="match status" value="1"/>
</dbReference>
<dbReference type="PANTHER" id="PTHR10071">
    <property type="entry name" value="TRANSCRIPTION FACTOR GATA FAMILY MEMBER"/>
    <property type="match status" value="1"/>
</dbReference>
<dbReference type="Pfam" id="PF00320">
    <property type="entry name" value="GATA"/>
    <property type="match status" value="1"/>
</dbReference>
<dbReference type="PRINTS" id="PR00619">
    <property type="entry name" value="GATAZNFINGER"/>
</dbReference>
<dbReference type="SMART" id="SM00401">
    <property type="entry name" value="ZnF_GATA"/>
    <property type="match status" value="1"/>
</dbReference>
<dbReference type="SUPFAM" id="SSF57716">
    <property type="entry name" value="Glucocorticoid receptor-like (DNA-binding domain)"/>
    <property type="match status" value="1"/>
</dbReference>
<dbReference type="PROSITE" id="PS00344">
    <property type="entry name" value="GATA_ZN_FINGER_1"/>
    <property type="match status" value="1"/>
</dbReference>
<dbReference type="PROSITE" id="PS50114">
    <property type="entry name" value="GATA_ZN_FINGER_2"/>
    <property type="match status" value="1"/>
</dbReference>
<organism evidence="8">
    <name type="scientific">Caenorhabditis elegans</name>
    <dbReference type="NCBI Taxonomy" id="6239"/>
    <lineage>
        <taxon>Eukaryota</taxon>
        <taxon>Metazoa</taxon>
        <taxon>Ecdysozoa</taxon>
        <taxon>Nematoda</taxon>
        <taxon>Chromadorea</taxon>
        <taxon>Rhabditida</taxon>
        <taxon>Rhabditina</taxon>
        <taxon>Rhabditomorpha</taxon>
        <taxon>Rhabditoidea</taxon>
        <taxon>Rhabditidae</taxon>
        <taxon>Peloderinae</taxon>
        <taxon>Caenorhabditis</taxon>
    </lineage>
</organism>
<keyword id="KW-0024">Alternative initiation</keyword>
<keyword id="KW-0479">Metal-binding</keyword>
<keyword id="KW-0539">Nucleus</keyword>
<keyword id="KW-1185">Reference proteome</keyword>
<keyword id="KW-0804">Transcription</keyword>
<keyword id="KW-0805">Transcription regulation</keyword>
<keyword id="KW-0862">Zinc</keyword>
<keyword id="KW-0863">Zinc-finger</keyword>
<gene>
    <name evidence="9" type="primary">elt-4</name>
    <name evidence="9" type="ORF">C39B10.6</name>
</gene>
<sequence length="72" mass="8131">MDNNYLDASHRKRLVCSNCNGTNTTLWRRKAEGDPVCNACGLYFKLHHVTRPIPMKKNKKHAVLPAPGISKL</sequence>
<reference evidence="8" key="1">
    <citation type="journal article" date="1998" name="Science">
        <title>Genome sequence of the nematode C. elegans: a platform for investigating biology.</title>
        <authorList>
            <consortium name="The C. elegans sequencing consortium"/>
        </authorList>
    </citation>
    <scope>NUCLEOTIDE SEQUENCE [LARGE SCALE GENOMIC DNA]</scope>
    <source>
        <strain evidence="8">Bristol N2</strain>
    </source>
</reference>
<reference evidence="5" key="2">
    <citation type="journal article" date="2003" name="Genetics">
        <title>The evolutionary duplication and probable demise of an endodermal GATA factor in Caenorhabditis elegans.</title>
        <authorList>
            <person name="Fukushige T."/>
            <person name="Goszczynski B."/>
            <person name="Tian H."/>
            <person name="McGhee J.D."/>
        </authorList>
    </citation>
    <scope>DEVELOPMENTAL STAGE</scope>
    <scope>DISRUPTION PHENOTYPE</scope>
</reference>
<reference evidence="5" key="3">
    <citation type="journal article" date="2010" name="J. Biol. Chem.">
        <title>A novel heme-responsive element mediates transcriptional regulation in Caenorhabditis elegans.</title>
        <authorList>
            <person name="Sinclair J."/>
            <person name="Hamza I."/>
        </authorList>
    </citation>
    <scope>FUNCTION</scope>
    <scope>DISRUPTION PHENOTYPE</scope>
</reference>
<reference evidence="5" key="4">
    <citation type="journal article" date="2014" name="Longev. Healthspan">
        <title>Transcriptional regulation of Caenorhabditis elegans FOXO/DAF-16 modulates lifespan.</title>
        <authorList>
            <person name="Bansal A."/>
            <person name="Kwon E.S."/>
            <person name="Conte D. Jr."/>
            <person name="Liu H."/>
            <person name="Gilchrist M.J."/>
            <person name="MacNeil L.T."/>
            <person name="Tissenbaum H.A."/>
        </authorList>
    </citation>
    <scope>FUNCTION</scope>
    <scope>DISRUPTION PHENOTYPE</scope>
</reference>
<proteinExistence type="evidence at transcript level"/>